<protein>
    <recommendedName>
        <fullName evidence="1">Exodeoxyribonuclease 7 large subunit</fullName>
        <ecNumber evidence="1">3.1.11.6</ecNumber>
    </recommendedName>
    <alternativeName>
        <fullName evidence="1">Exodeoxyribonuclease VII large subunit</fullName>
        <shortName evidence="1">Exonuclease VII large subunit</shortName>
    </alternativeName>
</protein>
<proteinExistence type="inferred from homology"/>
<reference key="1">
    <citation type="journal article" date="2008" name="Genome Res.">
        <title>Chlamydia trachomatis: genome sequence analysis of lymphogranuloma venereum isolates.</title>
        <authorList>
            <person name="Thomson N.R."/>
            <person name="Holden M.T.G."/>
            <person name="Carder C."/>
            <person name="Lennard N."/>
            <person name="Lockey S.J."/>
            <person name="Marsh P."/>
            <person name="Skipp P."/>
            <person name="O'Connor C.D."/>
            <person name="Goodhead I."/>
            <person name="Norbertzcak H."/>
            <person name="Harris B."/>
            <person name="Ormond D."/>
            <person name="Rance R."/>
            <person name="Quail M.A."/>
            <person name="Parkhill J."/>
            <person name="Stephens R.S."/>
            <person name="Clarke I.N."/>
        </authorList>
    </citation>
    <scope>NUCLEOTIDE SEQUENCE [LARGE SCALE GENOMIC DNA]</scope>
    <source>
        <strain>ATCC VR-902B / DSM 19102 / 434/Bu</strain>
    </source>
</reference>
<gene>
    <name evidence="1" type="primary">xseA</name>
    <name type="ordered locus">CTL0583</name>
</gene>
<sequence>MSITSPPIEVSVLTDSIKNLLEKNFLRVVVKGELSNVSLQTSGHLYFAIKDSKAVLNGAFFHFRSKYFDRKPKDGDYVILHGKLTVYAPRGQYQIVAYALTFSGEGNLLQQFEERKQRLAAEGYFDPKRKKPLPSGARVIGVITSPTGAVIQDILRVLSRRCHQFQVILYPVTVQGATAAQEISQAIQFFNQNSMRVHALIIARGGGSIEDLWAFNEEELVKSIVASSIPIISAVGHETDFTLCDFASDVRAPTPSAAAEIVCKSSDQYRQELQNLRRYVSSHARQFIAAKKNLLTHWQRHLASVDFYHTAQQTLDYTRAALERGIETKLEYYKQRFAQYRRWLKSDVLIRIEKHLADLNQSLMLSIKNKIYTKKTSLNQLYTSCLKNELLNLQHRTQHSRNILSQLSRRLHIAIASSQQTHQECLVRLQNELSFTIQHLLTKAKERCQAIQEQASSLNPKNVLKRGFAQLFDFNKHFVIISAESLKQSDLVRVCLQDGEAVVSVKEVWLNNDKKG</sequence>
<accession>B0B7P6</accession>
<evidence type="ECO:0000255" key="1">
    <source>
        <dbReference type="HAMAP-Rule" id="MF_00378"/>
    </source>
</evidence>
<dbReference type="EC" id="3.1.11.6" evidence="1"/>
<dbReference type="EMBL" id="AM884176">
    <property type="protein sequence ID" value="CAP04022.1"/>
    <property type="molecule type" value="Genomic_DNA"/>
</dbReference>
<dbReference type="RefSeq" id="WP_009873731.1">
    <property type="nucleotide sequence ID" value="NC_010287.1"/>
</dbReference>
<dbReference type="RefSeq" id="YP_001654657.1">
    <property type="nucleotide sequence ID" value="NC_010287.1"/>
</dbReference>
<dbReference type="SMR" id="B0B7P6"/>
<dbReference type="KEGG" id="ctb:CTL0583"/>
<dbReference type="PATRIC" id="fig|471472.4.peg.627"/>
<dbReference type="HOGENOM" id="CLU_023625_3_1_0"/>
<dbReference type="Proteomes" id="UP001154402">
    <property type="component" value="Chromosome"/>
</dbReference>
<dbReference type="GO" id="GO:0005737">
    <property type="term" value="C:cytoplasm"/>
    <property type="evidence" value="ECO:0007669"/>
    <property type="project" value="UniProtKB-SubCell"/>
</dbReference>
<dbReference type="GO" id="GO:0009318">
    <property type="term" value="C:exodeoxyribonuclease VII complex"/>
    <property type="evidence" value="ECO:0007669"/>
    <property type="project" value="InterPro"/>
</dbReference>
<dbReference type="GO" id="GO:0008855">
    <property type="term" value="F:exodeoxyribonuclease VII activity"/>
    <property type="evidence" value="ECO:0007669"/>
    <property type="project" value="UniProtKB-UniRule"/>
</dbReference>
<dbReference type="GO" id="GO:0003676">
    <property type="term" value="F:nucleic acid binding"/>
    <property type="evidence" value="ECO:0007669"/>
    <property type="project" value="InterPro"/>
</dbReference>
<dbReference type="GO" id="GO:0006308">
    <property type="term" value="P:DNA catabolic process"/>
    <property type="evidence" value="ECO:0007669"/>
    <property type="project" value="UniProtKB-UniRule"/>
</dbReference>
<dbReference type="CDD" id="cd04489">
    <property type="entry name" value="ExoVII_LU_OBF"/>
    <property type="match status" value="1"/>
</dbReference>
<dbReference type="HAMAP" id="MF_00378">
    <property type="entry name" value="Exonuc_7_L"/>
    <property type="match status" value="1"/>
</dbReference>
<dbReference type="InterPro" id="IPR003753">
    <property type="entry name" value="Exonuc_VII_L"/>
</dbReference>
<dbReference type="InterPro" id="IPR020579">
    <property type="entry name" value="Exonuc_VII_lsu_C"/>
</dbReference>
<dbReference type="InterPro" id="IPR025824">
    <property type="entry name" value="OB-fold_nuc-bd_dom"/>
</dbReference>
<dbReference type="NCBIfam" id="TIGR00237">
    <property type="entry name" value="xseA"/>
    <property type="match status" value="1"/>
</dbReference>
<dbReference type="PANTHER" id="PTHR30008">
    <property type="entry name" value="EXODEOXYRIBONUCLEASE 7 LARGE SUBUNIT"/>
    <property type="match status" value="1"/>
</dbReference>
<dbReference type="PANTHER" id="PTHR30008:SF0">
    <property type="entry name" value="EXODEOXYRIBONUCLEASE 7 LARGE SUBUNIT"/>
    <property type="match status" value="1"/>
</dbReference>
<dbReference type="Pfam" id="PF02601">
    <property type="entry name" value="Exonuc_VII_L"/>
    <property type="match status" value="2"/>
</dbReference>
<dbReference type="Pfam" id="PF13742">
    <property type="entry name" value="tRNA_anti_2"/>
    <property type="match status" value="1"/>
</dbReference>
<feature type="chain" id="PRO_1000122046" description="Exodeoxyribonuclease 7 large subunit">
    <location>
        <begin position="1"/>
        <end position="516"/>
    </location>
</feature>
<comment type="function">
    <text evidence="1">Bidirectionally degrades single-stranded DNA into large acid-insoluble oligonucleotides, which are then degraded further into small acid-soluble oligonucleotides.</text>
</comment>
<comment type="catalytic activity">
    <reaction evidence="1">
        <text>Exonucleolytic cleavage in either 5'- to 3'- or 3'- to 5'-direction to yield nucleoside 5'-phosphates.</text>
        <dbReference type="EC" id="3.1.11.6"/>
    </reaction>
</comment>
<comment type="subunit">
    <text evidence="1">Heterooligomer composed of large and small subunits.</text>
</comment>
<comment type="subcellular location">
    <subcellularLocation>
        <location evidence="1">Cytoplasm</location>
    </subcellularLocation>
</comment>
<comment type="similarity">
    <text evidence="1">Belongs to the XseA family.</text>
</comment>
<keyword id="KW-0963">Cytoplasm</keyword>
<keyword id="KW-0269">Exonuclease</keyword>
<keyword id="KW-0378">Hydrolase</keyword>
<keyword id="KW-0540">Nuclease</keyword>
<name>EX7L_CHLT2</name>
<organism>
    <name type="scientific">Chlamydia trachomatis serovar L2 (strain ATCC VR-902B / DSM 19102 / 434/Bu)</name>
    <dbReference type="NCBI Taxonomy" id="471472"/>
    <lineage>
        <taxon>Bacteria</taxon>
        <taxon>Pseudomonadati</taxon>
        <taxon>Chlamydiota</taxon>
        <taxon>Chlamydiia</taxon>
        <taxon>Chlamydiales</taxon>
        <taxon>Chlamydiaceae</taxon>
        <taxon>Chlamydia/Chlamydophila group</taxon>
        <taxon>Chlamydia</taxon>
    </lineage>
</organism>